<feature type="chain" id="PRO_0000067264" description="1-aminocyclopropane-1-carboxylate oxidase homolog">
    <location>
        <begin position="1"/>
        <end position="363"/>
    </location>
</feature>
<feature type="domain" description="Fe2OG dioxygenase" evidence="1">
    <location>
        <begin position="212"/>
        <end position="312"/>
    </location>
</feature>
<feature type="binding site" evidence="1">
    <location>
        <position position="236"/>
    </location>
    <ligand>
        <name>Fe cation</name>
        <dbReference type="ChEBI" id="CHEBI:24875"/>
    </ligand>
</feature>
<feature type="binding site" evidence="1">
    <location>
        <position position="238"/>
    </location>
    <ligand>
        <name>Fe cation</name>
        <dbReference type="ChEBI" id="CHEBI:24875"/>
    </ligand>
</feature>
<feature type="binding site" evidence="1">
    <location>
        <position position="292"/>
    </location>
    <ligand>
        <name>Fe cation</name>
        <dbReference type="ChEBI" id="CHEBI:24875"/>
    </ligand>
</feature>
<name>ACCH3_SOLLC</name>
<proteinExistence type="evidence at transcript level"/>
<organism>
    <name type="scientific">Solanum lycopersicum</name>
    <name type="common">Tomato</name>
    <name type="synonym">Lycopersicon esculentum</name>
    <dbReference type="NCBI Taxonomy" id="4081"/>
    <lineage>
        <taxon>Eukaryota</taxon>
        <taxon>Viridiplantae</taxon>
        <taxon>Streptophyta</taxon>
        <taxon>Embryophyta</taxon>
        <taxon>Tracheophyta</taxon>
        <taxon>Spermatophyta</taxon>
        <taxon>Magnoliopsida</taxon>
        <taxon>eudicotyledons</taxon>
        <taxon>Gunneridae</taxon>
        <taxon>Pentapetalae</taxon>
        <taxon>asterids</taxon>
        <taxon>lamiids</taxon>
        <taxon>Solanales</taxon>
        <taxon>Solanaceae</taxon>
        <taxon>Solanoideae</taxon>
        <taxon>Solaneae</taxon>
        <taxon>Solanum</taxon>
        <taxon>Solanum subgen. Lycopersicon</taxon>
    </lineage>
</organism>
<sequence length="363" mass="41077">MESPRVEESYDKMSELKAFDDTKAGVKGLVDSGITKVPQIFVLPPKDRAKKCETHFVFPVIDLQGIDEDPIKHKEIVDKVRDASEKWGFFQVVNHGIPTSVLDRTLQGTRQFFEQDNEVKKQYYTRDTAKKVVYTSNLDLYKSSVPAASWRDTIFCYMAPNPPSLQEFPTPCGESLIDFSKDVKKLGFTLLELLSEGLGLDRSYLKDYMDCFHLFCSCNYYPPCPQPELTMGTIQHTDIGFVTILLQDDMGGLQVLHQNHWVDVPPTPGSLVVNIGDFLQLLSNDKYLSVEHRAISNNVGSRMSITCFFGESPYQSSKLYGPITELLSEDNPPKYRATTVKDHTSYLHNRGLDGTSALSRYKI</sequence>
<reference key="1">
    <citation type="journal article" date="1988" name="EMBO J.">
        <title>Interaction of a DNA binding factor with the 5'-flanking region of an ethylene-responsive fruit ripening gene from tomato.</title>
        <authorList>
            <person name="Deikman J."/>
            <person name="Fischer R.L."/>
        </authorList>
    </citation>
    <scope>NUCLEOTIDE SEQUENCE [GENOMIC DNA]</scope>
    <source>
        <strain>cv. VFNT Cherry</strain>
    </source>
</reference>
<comment type="developmental stage">
    <text>Expressed during fruit ripening.</text>
</comment>
<comment type="similarity">
    <text evidence="2">Belongs to the iron/ascorbate-dependent oxidoreductase family.</text>
</comment>
<gene>
    <name type="primary">ACO3</name>
</gene>
<protein>
    <recommendedName>
        <fullName>1-aminocyclopropane-1-carboxylate oxidase homolog</fullName>
    </recommendedName>
    <alternativeName>
        <fullName>Protein E8</fullName>
    </alternativeName>
</protein>
<dbReference type="EMBL" id="X13437">
    <property type="protein sequence ID" value="CAA31789.1"/>
    <property type="molecule type" value="Genomic_DNA"/>
</dbReference>
<dbReference type="PIR" id="S01642">
    <property type="entry name" value="S01642"/>
</dbReference>
<dbReference type="RefSeq" id="NP_001296142.1">
    <property type="nucleotide sequence ID" value="NM_001309213.1"/>
</dbReference>
<dbReference type="SMR" id="P10967"/>
<dbReference type="FunCoup" id="P10967">
    <property type="interactions" value="213"/>
</dbReference>
<dbReference type="STRING" id="4081.P10967"/>
<dbReference type="PaxDb" id="4081-Solyc09g089580.2.1"/>
<dbReference type="ProMEX" id="P10967"/>
<dbReference type="GeneID" id="101268031"/>
<dbReference type="KEGG" id="sly:101268031"/>
<dbReference type="eggNOG" id="KOG0143">
    <property type="taxonomic scope" value="Eukaryota"/>
</dbReference>
<dbReference type="HOGENOM" id="CLU_010119_0_0_1"/>
<dbReference type="InParanoid" id="P10967"/>
<dbReference type="OrthoDB" id="288590at2759"/>
<dbReference type="PhylomeDB" id="P10967"/>
<dbReference type="Proteomes" id="UP000004994">
    <property type="component" value="Unplaced"/>
</dbReference>
<dbReference type="ExpressionAtlas" id="P10967">
    <property type="expression patterns" value="baseline and differential"/>
</dbReference>
<dbReference type="GO" id="GO:0016706">
    <property type="term" value="F:2-oxoglutarate-dependent dioxygenase activity"/>
    <property type="evidence" value="ECO:0007669"/>
    <property type="project" value="UniProtKB-ARBA"/>
</dbReference>
<dbReference type="GO" id="GO:0031418">
    <property type="term" value="F:L-ascorbic acid binding"/>
    <property type="evidence" value="ECO:0007669"/>
    <property type="project" value="UniProtKB-KW"/>
</dbReference>
<dbReference type="GO" id="GO:0046872">
    <property type="term" value="F:metal ion binding"/>
    <property type="evidence" value="ECO:0007669"/>
    <property type="project" value="UniProtKB-KW"/>
</dbReference>
<dbReference type="GO" id="GO:0009805">
    <property type="term" value="P:coumarin biosynthetic process"/>
    <property type="evidence" value="ECO:0007669"/>
    <property type="project" value="UniProtKB-ARBA"/>
</dbReference>
<dbReference type="GO" id="GO:0009693">
    <property type="term" value="P:ethylene biosynthetic process"/>
    <property type="evidence" value="ECO:0007669"/>
    <property type="project" value="UniProtKB-KW"/>
</dbReference>
<dbReference type="GO" id="GO:0009835">
    <property type="term" value="P:fruit ripening"/>
    <property type="evidence" value="ECO:0007669"/>
    <property type="project" value="UniProtKB-KW"/>
</dbReference>
<dbReference type="GO" id="GO:0002238">
    <property type="term" value="P:response to molecule of fungal origin"/>
    <property type="evidence" value="ECO:0007669"/>
    <property type="project" value="UniProtKB-ARBA"/>
</dbReference>
<dbReference type="FunFam" id="2.60.120.330:FF:000005">
    <property type="entry name" value="1-aminocyclopropane-1-carboxylate oxidase homolog 1"/>
    <property type="match status" value="1"/>
</dbReference>
<dbReference type="Gene3D" id="2.60.120.330">
    <property type="entry name" value="B-lactam Antibiotic, Isopenicillin N Synthase, Chain"/>
    <property type="match status" value="1"/>
</dbReference>
<dbReference type="InterPro" id="IPR026992">
    <property type="entry name" value="DIOX_N"/>
</dbReference>
<dbReference type="InterPro" id="IPR044861">
    <property type="entry name" value="IPNS-like_FE2OG_OXY"/>
</dbReference>
<dbReference type="InterPro" id="IPR027443">
    <property type="entry name" value="IPNS-like_sf"/>
</dbReference>
<dbReference type="InterPro" id="IPR005123">
    <property type="entry name" value="Oxoglu/Fe-dep_dioxygenase_dom"/>
</dbReference>
<dbReference type="PANTHER" id="PTHR10209:SF730">
    <property type="entry name" value="1-AMINOCYCLOPROPANE-1-CARBOXYLATE OXIDASE HOMOLOG"/>
    <property type="match status" value="1"/>
</dbReference>
<dbReference type="PANTHER" id="PTHR10209">
    <property type="entry name" value="OXIDOREDUCTASE, 2OG-FE II OXYGENASE FAMILY PROTEIN"/>
    <property type="match status" value="1"/>
</dbReference>
<dbReference type="Pfam" id="PF03171">
    <property type="entry name" value="2OG-FeII_Oxy"/>
    <property type="match status" value="1"/>
</dbReference>
<dbReference type="Pfam" id="PF14226">
    <property type="entry name" value="DIOX_N"/>
    <property type="match status" value="1"/>
</dbReference>
<dbReference type="SUPFAM" id="SSF51197">
    <property type="entry name" value="Clavaminate synthase-like"/>
    <property type="match status" value="1"/>
</dbReference>
<dbReference type="PROSITE" id="PS51471">
    <property type="entry name" value="FE2OG_OXY"/>
    <property type="match status" value="1"/>
</dbReference>
<keyword id="KW-0266">Ethylene biosynthesis</keyword>
<keyword id="KW-0292">Fruit ripening</keyword>
<keyword id="KW-0408">Iron</keyword>
<keyword id="KW-0479">Metal-binding</keyword>
<keyword id="KW-0560">Oxidoreductase</keyword>
<keyword id="KW-1185">Reference proteome</keyword>
<keyword id="KW-0847">Vitamin C</keyword>
<evidence type="ECO:0000255" key="1">
    <source>
        <dbReference type="PROSITE-ProRule" id="PRU00805"/>
    </source>
</evidence>
<evidence type="ECO:0000305" key="2"/>
<accession>P10967</accession>